<sequence length="99" mass="10779">MLIMNLQLFAHKKGVGSSKNGRDSESKRLGVKSADGQFVLAGNILVRQRGTKIHPGENVGKGKDDTLFAKVDGVVKFERLGRDKKRASVYPVDVEAIAE</sequence>
<gene>
    <name evidence="2" type="primary">rpmA</name>
    <name type="ordered locus">Cbei_0510</name>
</gene>
<organism>
    <name type="scientific">Clostridium beijerinckii (strain ATCC 51743 / NCIMB 8052)</name>
    <name type="common">Clostridium acetobutylicum</name>
    <dbReference type="NCBI Taxonomy" id="290402"/>
    <lineage>
        <taxon>Bacteria</taxon>
        <taxon>Bacillati</taxon>
        <taxon>Bacillota</taxon>
        <taxon>Clostridia</taxon>
        <taxon>Eubacteriales</taxon>
        <taxon>Clostridiaceae</taxon>
        <taxon>Clostridium</taxon>
    </lineage>
</organism>
<comment type="PTM">
    <text evidence="1">The N-terminus is cleaved by ribosomal processing cysteine protease Prp.</text>
</comment>
<comment type="similarity">
    <text evidence="2">Belongs to the bacterial ribosomal protein bL27 family.</text>
</comment>
<protein>
    <recommendedName>
        <fullName evidence="2">Large ribosomal subunit protein bL27</fullName>
    </recommendedName>
    <alternativeName>
        <fullName evidence="3">50S ribosomal protein L27</fullName>
    </alternativeName>
</protein>
<keyword id="KW-0687">Ribonucleoprotein</keyword>
<keyword id="KW-0689">Ribosomal protein</keyword>
<dbReference type="EMBL" id="CP000721">
    <property type="protein sequence ID" value="ABR32698.1"/>
    <property type="molecule type" value="Genomic_DNA"/>
</dbReference>
<dbReference type="RefSeq" id="WP_011967859.1">
    <property type="nucleotide sequence ID" value="NC_009617.1"/>
</dbReference>
<dbReference type="SMR" id="A6LQR8"/>
<dbReference type="GeneID" id="66343425"/>
<dbReference type="KEGG" id="cbe:Cbei_0510"/>
<dbReference type="eggNOG" id="COG0211">
    <property type="taxonomic scope" value="Bacteria"/>
</dbReference>
<dbReference type="HOGENOM" id="CLU_095424_4_0_9"/>
<dbReference type="Proteomes" id="UP000000565">
    <property type="component" value="Chromosome"/>
</dbReference>
<dbReference type="GO" id="GO:0022625">
    <property type="term" value="C:cytosolic large ribosomal subunit"/>
    <property type="evidence" value="ECO:0007669"/>
    <property type="project" value="TreeGrafter"/>
</dbReference>
<dbReference type="GO" id="GO:0003735">
    <property type="term" value="F:structural constituent of ribosome"/>
    <property type="evidence" value="ECO:0007669"/>
    <property type="project" value="InterPro"/>
</dbReference>
<dbReference type="GO" id="GO:0006412">
    <property type="term" value="P:translation"/>
    <property type="evidence" value="ECO:0007669"/>
    <property type="project" value="UniProtKB-UniRule"/>
</dbReference>
<dbReference type="FunFam" id="2.40.50.100:FF:000004">
    <property type="entry name" value="50S ribosomal protein L27"/>
    <property type="match status" value="1"/>
</dbReference>
<dbReference type="Gene3D" id="2.40.50.100">
    <property type="match status" value="1"/>
</dbReference>
<dbReference type="HAMAP" id="MF_00539">
    <property type="entry name" value="Ribosomal_bL27"/>
    <property type="match status" value="1"/>
</dbReference>
<dbReference type="InterPro" id="IPR001684">
    <property type="entry name" value="Ribosomal_bL27"/>
</dbReference>
<dbReference type="InterPro" id="IPR018261">
    <property type="entry name" value="Ribosomal_bL27_CS"/>
</dbReference>
<dbReference type="NCBIfam" id="TIGR00062">
    <property type="entry name" value="L27"/>
    <property type="match status" value="1"/>
</dbReference>
<dbReference type="PANTHER" id="PTHR15893:SF0">
    <property type="entry name" value="LARGE RIBOSOMAL SUBUNIT PROTEIN BL27M"/>
    <property type="match status" value="1"/>
</dbReference>
<dbReference type="PANTHER" id="PTHR15893">
    <property type="entry name" value="RIBOSOMAL PROTEIN L27"/>
    <property type="match status" value="1"/>
</dbReference>
<dbReference type="Pfam" id="PF01016">
    <property type="entry name" value="Ribosomal_L27"/>
    <property type="match status" value="1"/>
</dbReference>
<dbReference type="PRINTS" id="PR00063">
    <property type="entry name" value="RIBOSOMALL27"/>
</dbReference>
<dbReference type="SUPFAM" id="SSF110324">
    <property type="entry name" value="Ribosomal L27 protein-like"/>
    <property type="match status" value="1"/>
</dbReference>
<dbReference type="PROSITE" id="PS00831">
    <property type="entry name" value="RIBOSOMAL_L27"/>
    <property type="match status" value="1"/>
</dbReference>
<accession>A6LQR8</accession>
<feature type="propeptide" id="PRO_0000459870" evidence="1">
    <location>
        <begin position="1"/>
        <end position="9"/>
    </location>
</feature>
<feature type="chain" id="PRO_1000081881" description="Large ribosomal subunit protein bL27">
    <location>
        <begin position="10"/>
        <end position="99"/>
    </location>
</feature>
<reference key="1">
    <citation type="submission" date="2007-06" db="EMBL/GenBank/DDBJ databases">
        <title>Complete sequence of Clostridium beijerinckii NCIMB 8052.</title>
        <authorList>
            <consortium name="US DOE Joint Genome Institute"/>
            <person name="Copeland A."/>
            <person name="Lucas S."/>
            <person name="Lapidus A."/>
            <person name="Barry K."/>
            <person name="Detter J.C."/>
            <person name="Glavina del Rio T."/>
            <person name="Hammon N."/>
            <person name="Israni S."/>
            <person name="Dalin E."/>
            <person name="Tice H."/>
            <person name="Pitluck S."/>
            <person name="Sims D."/>
            <person name="Brettin T."/>
            <person name="Bruce D."/>
            <person name="Tapia R."/>
            <person name="Brainard J."/>
            <person name="Schmutz J."/>
            <person name="Larimer F."/>
            <person name="Land M."/>
            <person name="Hauser L."/>
            <person name="Kyrpides N."/>
            <person name="Mikhailova N."/>
            <person name="Bennet G."/>
            <person name="Cann I."/>
            <person name="Chen J.-S."/>
            <person name="Contreras A.L."/>
            <person name="Jones D."/>
            <person name="Kashket E."/>
            <person name="Mitchell W."/>
            <person name="Stoddard S."/>
            <person name="Schwarz W."/>
            <person name="Qureshi N."/>
            <person name="Young M."/>
            <person name="Shi Z."/>
            <person name="Ezeji T."/>
            <person name="White B."/>
            <person name="Blaschek H."/>
            <person name="Richardson P."/>
        </authorList>
    </citation>
    <scope>NUCLEOTIDE SEQUENCE [LARGE SCALE GENOMIC DNA]</scope>
    <source>
        <strain>ATCC 51743 / NCIMB 8052</strain>
    </source>
</reference>
<name>RL27_CLOB8</name>
<proteinExistence type="inferred from homology"/>
<evidence type="ECO:0000250" key="1">
    <source>
        <dbReference type="UniProtKB" id="Q2FXT0"/>
    </source>
</evidence>
<evidence type="ECO:0000255" key="2">
    <source>
        <dbReference type="HAMAP-Rule" id="MF_00539"/>
    </source>
</evidence>
<evidence type="ECO:0000305" key="3"/>